<accession>Q89485</accession>
<organism>
    <name type="scientific">Variola virus (isolate Human/India/Ind3/1967)</name>
    <name type="common">VARV</name>
    <name type="synonym">Smallpox virus</name>
    <dbReference type="NCBI Taxonomy" id="587200"/>
    <lineage>
        <taxon>Viruses</taxon>
        <taxon>Varidnaviria</taxon>
        <taxon>Bamfordvirae</taxon>
        <taxon>Nucleocytoviricota</taxon>
        <taxon>Pokkesviricetes</taxon>
        <taxon>Chitovirales</taxon>
        <taxon>Poxviridae</taxon>
        <taxon>Chordopoxvirinae</taxon>
        <taxon>Orthopoxvirus</taxon>
        <taxon>Variola virus</taxon>
    </lineage>
</organism>
<sequence>MDTTFVITPMGMLTITDTLYDDLDISIMDFIGPYIIGNIKTVQIDVRDIKYSDMQKCYFS</sequence>
<gene>
    <name type="primary">A38R</name>
</gene>
<name>A35_VAR67</name>
<proteinExistence type="inferred from homology"/>
<feature type="chain" id="PRO_0000412611" description="Truncated protein A35 homolog">
    <location>
        <begin position="1"/>
        <end position="60"/>
    </location>
</feature>
<keyword id="KW-1185">Reference proteome</keyword>
<comment type="miscellaneous">
    <text>Corresponds to the N-terminal region of the vaccinia protein A35.</text>
</comment>
<comment type="similarity">
    <text evidence="1">Belongs to the chordopoxvirinae A35 protein family.</text>
</comment>
<reference key="1">
    <citation type="journal article" date="1993" name="FEBS Lett.">
        <title>Genes of variola and vaccinia viruses necessary to overcome the host protective mechanisms.</title>
        <authorList>
            <person name="Shchelkunov S.N."/>
            <person name="Blinov V.M."/>
            <person name="Sandakhchiev L.S."/>
        </authorList>
    </citation>
    <scope>NUCLEOTIDE SEQUENCE [GENOMIC DNA]</scope>
</reference>
<reference key="2">
    <citation type="journal article" date="1994" name="Virus Res.">
        <title>Analysis of the nucleotide sequence of 53 kbp from the right terminus of the genome of variola major virus strain India-1967.</title>
        <authorList>
            <person name="Shchelkunov S.N."/>
            <person name="Blinov V.M."/>
            <person name="Resenchuk S.M."/>
            <person name="Totmenin A.V."/>
            <person name="Olenina L.V."/>
            <person name="Chirikova G.B."/>
            <person name="Sandakhchiev L.S."/>
        </authorList>
    </citation>
    <scope>NUCLEOTIDE SEQUENCE [GENOMIC DNA]</scope>
</reference>
<reference key="3">
    <citation type="journal article" date="1995" name="Virus Genes">
        <title>Two types of deletions in orthopoxvirus genomes.</title>
        <authorList>
            <person name="Shchelkunov S.N."/>
            <person name="Totmenin A.V."/>
        </authorList>
    </citation>
    <scope>NUCLEOTIDE SEQUENCE [GENOMIC DNA]</scope>
</reference>
<reference key="4">
    <citation type="journal article" date="1996" name="Virus Res.">
        <title>Analysis of the nucleotide sequence of 23.8 kbp from the left terminus of the genome of variola major virus strain India-1967.</title>
        <authorList>
            <person name="Shchelkunov S.N."/>
            <person name="Totmenin A.V."/>
            <person name="Sandakhchiev L.S."/>
        </authorList>
    </citation>
    <scope>NUCLEOTIDE SEQUENCE [GENOMIC DNA]</scope>
</reference>
<protein>
    <recommendedName>
        <fullName>Truncated protein A35 homolog</fullName>
    </recommendedName>
</protein>
<dbReference type="EMBL" id="X69198">
    <property type="protein sequence ID" value="CAA49083.1"/>
    <property type="molecule type" value="Genomic_DNA"/>
</dbReference>
<dbReference type="PIR" id="C36852">
    <property type="entry name" value="C36852"/>
</dbReference>
<dbReference type="PIR" id="D72168">
    <property type="entry name" value="D72168"/>
</dbReference>
<dbReference type="RefSeq" id="NP_042186.1">
    <property type="nucleotide sequence ID" value="NC_001611.1"/>
</dbReference>
<dbReference type="GeneID" id="1486516"/>
<dbReference type="KEGG" id="vg:1486516"/>
<dbReference type="Proteomes" id="UP000002060">
    <property type="component" value="Segment"/>
</dbReference>
<dbReference type="InterPro" id="IPR009247">
    <property type="entry name" value="Chordopox_A35R"/>
</dbReference>
<dbReference type="Pfam" id="PF05989">
    <property type="entry name" value="Chordopox_A35R"/>
    <property type="match status" value="1"/>
</dbReference>
<organismHost>
    <name type="scientific">Homo sapiens</name>
    <name type="common">Human</name>
    <dbReference type="NCBI Taxonomy" id="9606"/>
</organismHost>
<evidence type="ECO:0000305" key="1"/>